<name>QUEA_STRPQ</name>
<reference key="1">
    <citation type="journal article" date="2003" name="Genome Res.">
        <title>Genome sequence of an M3 strain of Streptococcus pyogenes reveals a large-scale genomic rearrangement in invasive strains and new insights into phage evolution.</title>
        <authorList>
            <person name="Nakagawa I."/>
            <person name="Kurokawa K."/>
            <person name="Yamashita A."/>
            <person name="Nakata M."/>
            <person name="Tomiyasu Y."/>
            <person name="Okahashi N."/>
            <person name="Kawabata S."/>
            <person name="Yamazaki K."/>
            <person name="Shiba T."/>
            <person name="Yasunaga T."/>
            <person name="Hayashi H."/>
            <person name="Hattori M."/>
            <person name="Hamada S."/>
        </authorList>
    </citation>
    <scope>NUCLEOTIDE SEQUENCE [LARGE SCALE GENOMIC DNA]</scope>
    <source>
        <strain>SSI-1</strain>
    </source>
</reference>
<gene>
    <name evidence="1" type="primary">queA</name>
    <name type="ordered locus">SPs0797</name>
</gene>
<sequence>MNTNDFDFELPEELIAQTPLEKRDSSKLLIIDHRQKTMVDSHFDHIIDQLNPGDALVMNNTRVLPARLYGEKPDTHGHVELLLLKNTQGDQWEVLAKPAKRLKVGSQVNFGDGHLKATIIDELEHGGRIVEFSYDGIFLEVLESLGEMPLPPYIHEKLEDAERYQTVYAKENGSAAAPTAGLHFTTDLLKKIEAKGVHLVYLTLHVGLGTFRPVSVDNLDEHDMHSEFYSLSEEAAQTLRDVKQAGGRVVAVGTTSIRTLETIGSKFQGDIQADSGWTNIFIKPGYQFKVVDAFSTNFHLPKSTLVMLVSAFAGRDFVLEAYRHAVDEKYRFFSFGDAMFVN</sequence>
<dbReference type="EC" id="2.4.99.17" evidence="1"/>
<dbReference type="EMBL" id="BA000034">
    <property type="protein sequence ID" value="BAC63892.1"/>
    <property type="status" value="ALT_FRAME"/>
    <property type="molecule type" value="Genomic_DNA"/>
</dbReference>
<dbReference type="SMR" id="P0DD77"/>
<dbReference type="KEGG" id="sps:SPs0797"/>
<dbReference type="HOGENOM" id="CLU_039110_1_0_9"/>
<dbReference type="UniPathway" id="UPA00392"/>
<dbReference type="GO" id="GO:0005737">
    <property type="term" value="C:cytoplasm"/>
    <property type="evidence" value="ECO:0007669"/>
    <property type="project" value="UniProtKB-SubCell"/>
</dbReference>
<dbReference type="GO" id="GO:0051075">
    <property type="term" value="F:S-adenosylmethionine:tRNA ribosyltransferase-isomerase activity"/>
    <property type="evidence" value="ECO:0007669"/>
    <property type="project" value="UniProtKB-EC"/>
</dbReference>
<dbReference type="GO" id="GO:0008616">
    <property type="term" value="P:queuosine biosynthetic process"/>
    <property type="evidence" value="ECO:0007669"/>
    <property type="project" value="UniProtKB-UniRule"/>
</dbReference>
<dbReference type="GO" id="GO:0002099">
    <property type="term" value="P:tRNA wobble guanine modification"/>
    <property type="evidence" value="ECO:0007669"/>
    <property type="project" value="TreeGrafter"/>
</dbReference>
<dbReference type="FunFam" id="2.40.10.240:FF:000002">
    <property type="entry name" value="S-adenosylmethionine:tRNA ribosyltransferase-isomerase"/>
    <property type="match status" value="1"/>
</dbReference>
<dbReference type="FunFam" id="3.40.1780.10:FF:000001">
    <property type="entry name" value="S-adenosylmethionine:tRNA ribosyltransferase-isomerase"/>
    <property type="match status" value="1"/>
</dbReference>
<dbReference type="Gene3D" id="2.40.10.240">
    <property type="entry name" value="QueA-like"/>
    <property type="match status" value="1"/>
</dbReference>
<dbReference type="Gene3D" id="3.40.1780.10">
    <property type="entry name" value="QueA-like"/>
    <property type="match status" value="1"/>
</dbReference>
<dbReference type="HAMAP" id="MF_00113">
    <property type="entry name" value="QueA"/>
    <property type="match status" value="1"/>
</dbReference>
<dbReference type="InterPro" id="IPR003699">
    <property type="entry name" value="QueA"/>
</dbReference>
<dbReference type="InterPro" id="IPR042118">
    <property type="entry name" value="QueA_dom1"/>
</dbReference>
<dbReference type="InterPro" id="IPR042119">
    <property type="entry name" value="QueA_dom2"/>
</dbReference>
<dbReference type="InterPro" id="IPR036100">
    <property type="entry name" value="QueA_sf"/>
</dbReference>
<dbReference type="NCBIfam" id="NF001140">
    <property type="entry name" value="PRK00147.1"/>
    <property type="match status" value="1"/>
</dbReference>
<dbReference type="NCBIfam" id="TIGR00113">
    <property type="entry name" value="queA"/>
    <property type="match status" value="1"/>
</dbReference>
<dbReference type="PANTHER" id="PTHR30307">
    <property type="entry name" value="S-ADENOSYLMETHIONINE:TRNA RIBOSYLTRANSFERASE-ISOMERASE"/>
    <property type="match status" value="1"/>
</dbReference>
<dbReference type="PANTHER" id="PTHR30307:SF0">
    <property type="entry name" value="S-ADENOSYLMETHIONINE:TRNA RIBOSYLTRANSFERASE-ISOMERASE"/>
    <property type="match status" value="1"/>
</dbReference>
<dbReference type="Pfam" id="PF02547">
    <property type="entry name" value="Queuosine_synth"/>
    <property type="match status" value="1"/>
</dbReference>
<dbReference type="SUPFAM" id="SSF111337">
    <property type="entry name" value="QueA-like"/>
    <property type="match status" value="1"/>
</dbReference>
<organism>
    <name type="scientific">Streptococcus pyogenes serotype M3 (strain SSI-1)</name>
    <dbReference type="NCBI Taxonomy" id="193567"/>
    <lineage>
        <taxon>Bacteria</taxon>
        <taxon>Bacillati</taxon>
        <taxon>Bacillota</taxon>
        <taxon>Bacilli</taxon>
        <taxon>Lactobacillales</taxon>
        <taxon>Streptococcaceae</taxon>
        <taxon>Streptococcus</taxon>
    </lineage>
</organism>
<accession>P0DD77</accession>
<accession>Q8K6Z3</accession>
<evidence type="ECO:0000255" key="1">
    <source>
        <dbReference type="HAMAP-Rule" id="MF_00113"/>
    </source>
</evidence>
<evidence type="ECO:0000305" key="2"/>
<feature type="chain" id="PRO_0000411478" description="S-adenosylmethionine:tRNA ribosyltransferase-isomerase">
    <location>
        <begin position="1"/>
        <end position="342"/>
    </location>
</feature>
<proteinExistence type="inferred from homology"/>
<comment type="function">
    <text evidence="1">Transfers and isomerizes the ribose moiety from AdoMet to the 7-aminomethyl group of 7-deazaguanine (preQ1-tRNA) to give epoxyqueuosine (oQ-tRNA).</text>
</comment>
<comment type="catalytic activity">
    <reaction evidence="1">
        <text>7-aminomethyl-7-carbaguanosine(34) in tRNA + S-adenosyl-L-methionine = epoxyqueuosine(34) in tRNA + adenine + L-methionine + 2 H(+)</text>
        <dbReference type="Rhea" id="RHEA:32155"/>
        <dbReference type="Rhea" id="RHEA-COMP:10342"/>
        <dbReference type="Rhea" id="RHEA-COMP:18582"/>
        <dbReference type="ChEBI" id="CHEBI:15378"/>
        <dbReference type="ChEBI" id="CHEBI:16708"/>
        <dbReference type="ChEBI" id="CHEBI:57844"/>
        <dbReference type="ChEBI" id="CHEBI:59789"/>
        <dbReference type="ChEBI" id="CHEBI:82833"/>
        <dbReference type="ChEBI" id="CHEBI:194443"/>
        <dbReference type="EC" id="2.4.99.17"/>
    </reaction>
</comment>
<comment type="pathway">
    <text evidence="1">tRNA modification; tRNA-queuosine biosynthesis.</text>
</comment>
<comment type="subunit">
    <text evidence="1">Monomer.</text>
</comment>
<comment type="subcellular location">
    <subcellularLocation>
        <location evidence="1">Cytoplasm</location>
    </subcellularLocation>
</comment>
<comment type="similarity">
    <text evidence="1">Belongs to the QueA family.</text>
</comment>
<comment type="sequence caution" evidence="2">
    <conflict type="frameshift">
        <sequence resource="EMBL-CDS" id="BAC63892"/>
    </conflict>
</comment>
<protein>
    <recommendedName>
        <fullName evidence="1">S-adenosylmethionine:tRNA ribosyltransferase-isomerase</fullName>
        <ecNumber evidence="1">2.4.99.17</ecNumber>
    </recommendedName>
    <alternativeName>
        <fullName evidence="1">Queuosine biosynthesis protein QueA</fullName>
    </alternativeName>
</protein>
<keyword id="KW-0963">Cytoplasm</keyword>
<keyword id="KW-0671">Queuosine biosynthesis</keyword>
<keyword id="KW-0949">S-adenosyl-L-methionine</keyword>
<keyword id="KW-0808">Transferase</keyword>